<evidence type="ECO:0000250" key="1"/>
<evidence type="ECO:0000256" key="2">
    <source>
        <dbReference type="SAM" id="MobiDB-lite"/>
    </source>
</evidence>
<organism>
    <name type="scientific">Trypanosoma cruzi</name>
    <dbReference type="NCBI Taxonomy" id="5693"/>
    <lineage>
        <taxon>Eukaryota</taxon>
        <taxon>Discoba</taxon>
        <taxon>Euglenozoa</taxon>
        <taxon>Kinetoplastea</taxon>
        <taxon>Metakinetoplastina</taxon>
        <taxon>Trypanosomatida</taxon>
        <taxon>Trypanosomatidae</taxon>
        <taxon>Trypanosoma</taxon>
        <taxon>Schizotrypanum</taxon>
    </lineage>
</organism>
<keyword id="KW-0158">Chromosome</keyword>
<keyword id="KW-0238">DNA-binding</keyword>
<keyword id="KW-0539">Nucleus</keyword>
<reference key="1">
    <citation type="journal article" date="1994" name="Mol. Biochem. Parasitol.">
        <title>A gene family encoding heterogeneous histone H1 proteins in Trypanosoma cruzi.</title>
        <authorList>
            <person name="Aaslund L."/>
            <person name="Carlsson L."/>
            <person name="Henriksson J."/>
            <person name="Rydaaker M."/>
            <person name="Toro G.C."/>
            <person name="Galanti N."/>
            <person name="Pettersson U."/>
        </authorList>
    </citation>
    <scope>NUCLEOTIDE SEQUENCE [GENOMIC DNA]</scope>
    <source>
        <strain>Tulahuen 2</strain>
    </source>
</reference>
<protein>
    <recommendedName>
        <fullName>Histone H1.M6.2</fullName>
    </recommendedName>
</protein>
<proteinExistence type="inferred from homology"/>
<feature type="chain" id="PRO_0000195995" description="Histone H1.M6.2">
    <location>
        <begin position="1"/>
        <end position="90"/>
    </location>
</feature>
<feature type="region of interest" description="Disordered" evidence="2">
    <location>
        <begin position="1"/>
        <end position="90"/>
    </location>
</feature>
<feature type="compositionally biased region" description="Basic residues" evidence="2">
    <location>
        <begin position="11"/>
        <end position="90"/>
    </location>
</feature>
<sequence>MSDAAVPPKKASPKKAAAKKASPKKAAAKKASPKKAAARKTAAKKTAKKPAVRKPAAKKRAAPKKKPAAAKKPAAKKAPKKAVKKAPKKK</sequence>
<dbReference type="EMBL" id="L27119">
    <property type="protein sequence ID" value="AAA66484.1"/>
    <property type="molecule type" value="Genomic_DNA"/>
</dbReference>
<dbReference type="GO" id="GO:0000786">
    <property type="term" value="C:nucleosome"/>
    <property type="evidence" value="ECO:0007669"/>
    <property type="project" value="InterPro"/>
</dbReference>
<dbReference type="GO" id="GO:0005634">
    <property type="term" value="C:nucleus"/>
    <property type="evidence" value="ECO:0007669"/>
    <property type="project" value="UniProtKB-SubCell"/>
</dbReference>
<dbReference type="GO" id="GO:0003677">
    <property type="term" value="F:DNA binding"/>
    <property type="evidence" value="ECO:0007669"/>
    <property type="project" value="UniProtKB-KW"/>
</dbReference>
<dbReference type="GO" id="GO:0030527">
    <property type="term" value="F:structural constituent of chromatin"/>
    <property type="evidence" value="ECO:0007669"/>
    <property type="project" value="InterPro"/>
</dbReference>
<dbReference type="GO" id="GO:0006334">
    <property type="term" value="P:nucleosome assembly"/>
    <property type="evidence" value="ECO:0007669"/>
    <property type="project" value="InterPro"/>
</dbReference>
<dbReference type="InterPro" id="IPR005819">
    <property type="entry name" value="H1/H5"/>
</dbReference>
<dbReference type="PRINTS" id="PR00624">
    <property type="entry name" value="HISTONEH5"/>
</dbReference>
<accession>P40274</accession>
<comment type="subcellular location">
    <subcellularLocation>
        <location evidence="1">Nucleus</location>
    </subcellularLocation>
    <subcellularLocation>
        <location evidence="1">Chromosome</location>
    </subcellularLocation>
</comment>
<name>H162_TRYCR</name>